<protein>
    <recommendedName>
        <fullName evidence="1">Thymidylate kinase</fullName>
        <ecNumber evidence="1">2.7.4.9</ecNumber>
    </recommendedName>
    <alternativeName>
        <fullName evidence="1">dTMP kinase</fullName>
    </alternativeName>
</protein>
<keyword id="KW-0067">ATP-binding</keyword>
<keyword id="KW-0418">Kinase</keyword>
<keyword id="KW-0545">Nucleotide biosynthesis</keyword>
<keyword id="KW-0547">Nucleotide-binding</keyword>
<keyword id="KW-0808">Transferase</keyword>
<evidence type="ECO:0000255" key="1">
    <source>
        <dbReference type="HAMAP-Rule" id="MF_00165"/>
    </source>
</evidence>
<organism>
    <name type="scientific">Dehalococcoides mccartyi (strain ATCC BAA-2100 / JCM 16839 / KCTC 5957 / BAV1)</name>
    <dbReference type="NCBI Taxonomy" id="216389"/>
    <lineage>
        <taxon>Bacteria</taxon>
        <taxon>Bacillati</taxon>
        <taxon>Chloroflexota</taxon>
        <taxon>Dehalococcoidia</taxon>
        <taxon>Dehalococcoidales</taxon>
        <taxon>Dehalococcoidaceae</taxon>
        <taxon>Dehalococcoides</taxon>
    </lineage>
</organism>
<proteinExistence type="inferred from homology"/>
<gene>
    <name evidence="1" type="primary">tmk</name>
    <name type="ordered locus">DehaBAV1_0704</name>
</gene>
<dbReference type="EC" id="2.7.4.9" evidence="1"/>
<dbReference type="EMBL" id="CP000688">
    <property type="protein sequence ID" value="ABQ17288.1"/>
    <property type="molecule type" value="Genomic_DNA"/>
</dbReference>
<dbReference type="SMR" id="A5FR84"/>
<dbReference type="KEGG" id="deb:DehaBAV1_0704"/>
<dbReference type="PATRIC" id="fig|216389.18.peg.753"/>
<dbReference type="HOGENOM" id="CLU_049131_0_2_0"/>
<dbReference type="GO" id="GO:0005829">
    <property type="term" value="C:cytosol"/>
    <property type="evidence" value="ECO:0007669"/>
    <property type="project" value="TreeGrafter"/>
</dbReference>
<dbReference type="GO" id="GO:0005524">
    <property type="term" value="F:ATP binding"/>
    <property type="evidence" value="ECO:0007669"/>
    <property type="project" value="UniProtKB-UniRule"/>
</dbReference>
<dbReference type="GO" id="GO:0004798">
    <property type="term" value="F:dTMP kinase activity"/>
    <property type="evidence" value="ECO:0007669"/>
    <property type="project" value="UniProtKB-UniRule"/>
</dbReference>
<dbReference type="GO" id="GO:0006233">
    <property type="term" value="P:dTDP biosynthetic process"/>
    <property type="evidence" value="ECO:0007669"/>
    <property type="project" value="InterPro"/>
</dbReference>
<dbReference type="GO" id="GO:0006235">
    <property type="term" value="P:dTTP biosynthetic process"/>
    <property type="evidence" value="ECO:0007669"/>
    <property type="project" value="UniProtKB-UniRule"/>
</dbReference>
<dbReference type="GO" id="GO:0006227">
    <property type="term" value="P:dUDP biosynthetic process"/>
    <property type="evidence" value="ECO:0007669"/>
    <property type="project" value="TreeGrafter"/>
</dbReference>
<dbReference type="CDD" id="cd01672">
    <property type="entry name" value="TMPK"/>
    <property type="match status" value="1"/>
</dbReference>
<dbReference type="FunFam" id="3.40.50.300:FF:000225">
    <property type="entry name" value="Thymidylate kinase"/>
    <property type="match status" value="1"/>
</dbReference>
<dbReference type="Gene3D" id="3.40.50.300">
    <property type="entry name" value="P-loop containing nucleotide triphosphate hydrolases"/>
    <property type="match status" value="1"/>
</dbReference>
<dbReference type="HAMAP" id="MF_00165">
    <property type="entry name" value="Thymidylate_kinase"/>
    <property type="match status" value="1"/>
</dbReference>
<dbReference type="InterPro" id="IPR027417">
    <property type="entry name" value="P-loop_NTPase"/>
</dbReference>
<dbReference type="InterPro" id="IPR039430">
    <property type="entry name" value="Thymidylate_kin-like_dom"/>
</dbReference>
<dbReference type="InterPro" id="IPR018095">
    <property type="entry name" value="Thymidylate_kin_CS"/>
</dbReference>
<dbReference type="InterPro" id="IPR018094">
    <property type="entry name" value="Thymidylate_kinase"/>
</dbReference>
<dbReference type="NCBIfam" id="TIGR00041">
    <property type="entry name" value="DTMP_kinase"/>
    <property type="match status" value="1"/>
</dbReference>
<dbReference type="PANTHER" id="PTHR10344">
    <property type="entry name" value="THYMIDYLATE KINASE"/>
    <property type="match status" value="1"/>
</dbReference>
<dbReference type="PANTHER" id="PTHR10344:SF4">
    <property type="entry name" value="UMP-CMP KINASE 2, MITOCHONDRIAL"/>
    <property type="match status" value="1"/>
</dbReference>
<dbReference type="Pfam" id="PF02223">
    <property type="entry name" value="Thymidylate_kin"/>
    <property type="match status" value="1"/>
</dbReference>
<dbReference type="SUPFAM" id="SSF52540">
    <property type="entry name" value="P-loop containing nucleoside triphosphate hydrolases"/>
    <property type="match status" value="1"/>
</dbReference>
<dbReference type="PROSITE" id="PS01331">
    <property type="entry name" value="THYMIDYLATE_KINASE"/>
    <property type="match status" value="1"/>
</dbReference>
<sequence length="208" mass="23113">MSLFITFEGGEGCGKSTQSKALYRYLKKKGLGCVLTHEPGGSKSGDKITRLLKWSKEEHISPLTELLLFNASRSILIDNVIKPALQDGKIVICDRYTDSTLAYQGYGRGLDLDTVKCVNSLASGGLVPDLTIWLDMDDKAALLRKGELPPDRFESENNGFHQRVRNGFGAIYATEPDRFLKLDASLPQSEIFSRIKQRVTILLGCRNE</sequence>
<comment type="function">
    <text evidence="1">Phosphorylation of dTMP to form dTDP in both de novo and salvage pathways of dTTP synthesis.</text>
</comment>
<comment type="catalytic activity">
    <reaction evidence="1">
        <text>dTMP + ATP = dTDP + ADP</text>
        <dbReference type="Rhea" id="RHEA:13517"/>
        <dbReference type="ChEBI" id="CHEBI:30616"/>
        <dbReference type="ChEBI" id="CHEBI:58369"/>
        <dbReference type="ChEBI" id="CHEBI:63528"/>
        <dbReference type="ChEBI" id="CHEBI:456216"/>
        <dbReference type="EC" id="2.7.4.9"/>
    </reaction>
</comment>
<comment type="similarity">
    <text evidence="1">Belongs to the thymidylate kinase family.</text>
</comment>
<accession>A5FR84</accession>
<reference key="1">
    <citation type="submission" date="2007-05" db="EMBL/GenBank/DDBJ databases">
        <title>Complete sequence of Dehalococcoides sp. BAV1.</title>
        <authorList>
            <consortium name="US DOE Joint Genome Institute"/>
            <person name="Copeland A."/>
            <person name="Lucas S."/>
            <person name="Lapidus A."/>
            <person name="Barry K."/>
            <person name="Detter J.C."/>
            <person name="Glavina del Rio T."/>
            <person name="Hammon N."/>
            <person name="Israni S."/>
            <person name="Pitluck S."/>
            <person name="Lowry S."/>
            <person name="Clum A."/>
            <person name="Schmutz J."/>
            <person name="Larimer F."/>
            <person name="Land M."/>
            <person name="Hauser L."/>
            <person name="Kyrpides N."/>
            <person name="Kim E."/>
            <person name="Ritalahti K.M."/>
            <person name="Loeffler F."/>
            <person name="Richardson P."/>
        </authorList>
    </citation>
    <scope>NUCLEOTIDE SEQUENCE [LARGE SCALE GENOMIC DNA]</scope>
    <source>
        <strain>ATCC BAA-2100 / JCM 16839 / KCTC 5957 / BAV1</strain>
    </source>
</reference>
<name>KTHY_DEHMB</name>
<feature type="chain" id="PRO_1000076962" description="Thymidylate kinase">
    <location>
        <begin position="1"/>
        <end position="208"/>
    </location>
</feature>
<feature type="binding site" evidence="1">
    <location>
        <begin position="9"/>
        <end position="16"/>
    </location>
    <ligand>
        <name>ATP</name>
        <dbReference type="ChEBI" id="CHEBI:30616"/>
    </ligand>
</feature>